<evidence type="ECO:0000255" key="1"/>
<evidence type="ECO:0000269" key="2">
    <source>
    </source>
</evidence>
<evidence type="ECO:0000305" key="3"/>
<evidence type="ECO:0000312" key="4">
    <source>
        <dbReference type="EMBL" id="AAF93313.1"/>
    </source>
</evidence>
<gene>
    <name evidence="4" type="ordered locus">VC_0136</name>
</gene>
<organism>
    <name type="scientific">Vibrio cholerae serotype O1 (strain ATCC 39315 / El Tor Inaba N16961)</name>
    <dbReference type="NCBI Taxonomy" id="243277"/>
    <lineage>
        <taxon>Bacteria</taxon>
        <taxon>Pseudomonadati</taxon>
        <taxon>Pseudomonadota</taxon>
        <taxon>Gammaproteobacteria</taxon>
        <taxon>Vibrionales</taxon>
        <taxon>Vibrionaceae</taxon>
        <taxon>Vibrio</taxon>
    </lineage>
</organism>
<comment type="function">
    <text evidence="2">Involved in positive regulation of motility and negative regulation of biofilm formation.</text>
</comment>
<comment type="subcellular location">
    <subcellularLocation>
        <location evidence="3">Cell inner membrane</location>
        <topology evidence="1">Multi-pass membrane protein</topology>
    </subcellularLocation>
</comment>
<comment type="disruption phenotype">
    <text evidence="2">Deletion mutant exhibits decreased motility. Mutation causes a slight decrease in flaA expression but does not affect flagellar morphology. Mutant has enhanced biofilm formation and vps gene expression.</text>
</comment>
<comment type="similarity">
    <text evidence="3">Belongs to the Rht family.</text>
</comment>
<accession>Q9KVK7</accession>
<feature type="chain" id="PRO_0000439661" description="Uncharacterized membrane protein VC_0136">
    <location>
        <begin position="1"/>
        <end position="205"/>
    </location>
</feature>
<feature type="transmembrane region" description="Helical" evidence="1">
    <location>
        <begin position="5"/>
        <end position="25"/>
    </location>
</feature>
<feature type="transmembrane region" description="Helical" evidence="1">
    <location>
        <begin position="41"/>
        <end position="61"/>
    </location>
</feature>
<feature type="transmembrane region" description="Helical" evidence="1">
    <location>
        <begin position="68"/>
        <end position="88"/>
    </location>
</feature>
<feature type="transmembrane region" description="Helical" evidence="1">
    <location>
        <begin position="117"/>
        <end position="137"/>
    </location>
</feature>
<feature type="transmembrane region" description="Helical" evidence="1">
    <location>
        <begin position="147"/>
        <end position="167"/>
    </location>
</feature>
<keyword id="KW-0997">Cell inner membrane</keyword>
<keyword id="KW-1003">Cell membrane</keyword>
<keyword id="KW-0472">Membrane</keyword>
<keyword id="KW-1185">Reference proteome</keyword>
<keyword id="KW-0812">Transmembrane</keyword>
<keyword id="KW-1133">Transmembrane helix</keyword>
<name>Y136_VIBCH</name>
<proteinExistence type="inferred from homology"/>
<sequence>MDIHVWLAYLLTAVVFSLAPGSGTVNSISNGLSYGTRHSLGAIIGLQIGLACHIVLVGIGIGALVAQSALAFTLIKWIGAAYLVWLGIQKWRDRAPLTATTTSHELSQAALLRKAVLINLTNPKSIVFLVALFPQFIDPTRDHWPQFLVLGITTVTIDAIVMFGYTALAAQLGRYIRSPNIMTRMNKLFGSMFMGCGMLLATAKA</sequence>
<reference key="1">
    <citation type="journal article" date="2000" name="Nature">
        <title>DNA sequence of both chromosomes of the cholera pathogen Vibrio cholerae.</title>
        <authorList>
            <person name="Heidelberg J.F."/>
            <person name="Eisen J.A."/>
            <person name="Nelson W.C."/>
            <person name="Clayton R.A."/>
            <person name="Gwinn M.L."/>
            <person name="Dodson R.J."/>
            <person name="Haft D.H."/>
            <person name="Hickey E.K."/>
            <person name="Peterson J.D."/>
            <person name="Umayam L.A."/>
            <person name="Gill S.R."/>
            <person name="Nelson K.E."/>
            <person name="Read T.D."/>
            <person name="Tettelin H."/>
            <person name="Richardson D.L."/>
            <person name="Ermolaeva M.D."/>
            <person name="Vamathevan J.J."/>
            <person name="Bass S."/>
            <person name="Qin H."/>
            <person name="Dragoi I."/>
            <person name="Sellers P."/>
            <person name="McDonald L.A."/>
            <person name="Utterback T.R."/>
            <person name="Fleischmann R.D."/>
            <person name="Nierman W.C."/>
            <person name="White O."/>
            <person name="Salzberg S.L."/>
            <person name="Smith H.O."/>
            <person name="Colwell R.R."/>
            <person name="Mekalanos J.J."/>
            <person name="Venter J.C."/>
            <person name="Fraser C.M."/>
        </authorList>
    </citation>
    <scope>NUCLEOTIDE SEQUENCE [LARGE SCALE GENOMIC DNA]</scope>
    <source>
        <strain>ATCC 39315 / El Tor Inaba N16961</strain>
    </source>
</reference>
<reference key="2">
    <citation type="journal article" date="2010" name="J. Bacteriol.">
        <title>Identification and characterization of a phosphodiesterase that inversely regulates motility and biofilm formation in Vibrio cholerae.</title>
        <authorList>
            <person name="Liu X."/>
            <person name="Beyhan S."/>
            <person name="Lim B."/>
            <person name="Linington R.G."/>
            <person name="Yildiz F.H."/>
        </authorList>
    </citation>
    <scope>FUNCTION</scope>
    <scope>DISRUPTION PHENOTYPE</scope>
    <source>
        <strain>El Tor A1552 / Serotype O1</strain>
    </source>
</reference>
<dbReference type="EMBL" id="AE003852">
    <property type="protein sequence ID" value="AAF93313.1"/>
    <property type="molecule type" value="Genomic_DNA"/>
</dbReference>
<dbReference type="PIR" id="G82358">
    <property type="entry name" value="G82358"/>
</dbReference>
<dbReference type="RefSeq" id="NP_229794.1">
    <property type="nucleotide sequence ID" value="NC_002505.1"/>
</dbReference>
<dbReference type="STRING" id="243277.VC_0136"/>
<dbReference type="DNASU" id="2615265"/>
<dbReference type="EnsemblBacteria" id="AAF93313">
    <property type="protein sequence ID" value="AAF93313"/>
    <property type="gene ID" value="VC_0136"/>
</dbReference>
<dbReference type="KEGG" id="vch:VC_0136"/>
<dbReference type="PATRIC" id="fig|243277.26.peg.126"/>
<dbReference type="eggNOG" id="COG1280">
    <property type="taxonomic scope" value="Bacteria"/>
</dbReference>
<dbReference type="HOGENOM" id="CLU_079569_2_1_6"/>
<dbReference type="Proteomes" id="UP000000584">
    <property type="component" value="Chromosome 1"/>
</dbReference>
<dbReference type="GO" id="GO:0005886">
    <property type="term" value="C:plasma membrane"/>
    <property type="evidence" value="ECO:0000318"/>
    <property type="project" value="GO_Central"/>
</dbReference>
<dbReference type="GO" id="GO:0042970">
    <property type="term" value="F:homoserine transmembrane transporter activity"/>
    <property type="evidence" value="ECO:0000318"/>
    <property type="project" value="GO_Central"/>
</dbReference>
<dbReference type="GO" id="GO:0042968">
    <property type="term" value="P:homoserine transport"/>
    <property type="evidence" value="ECO:0000318"/>
    <property type="project" value="GO_Central"/>
</dbReference>
<dbReference type="InterPro" id="IPR001123">
    <property type="entry name" value="LeuE-type"/>
</dbReference>
<dbReference type="NCBIfam" id="NF007812">
    <property type="entry name" value="PRK10520.1"/>
    <property type="match status" value="1"/>
</dbReference>
<dbReference type="PANTHER" id="PTHR30086">
    <property type="entry name" value="ARGININE EXPORTER PROTEIN ARGO"/>
    <property type="match status" value="1"/>
</dbReference>
<dbReference type="PANTHER" id="PTHR30086:SF14">
    <property type="entry name" value="HOMOSERINE_HOMOSERINE LACTONE EFFLUX PROTEIN"/>
    <property type="match status" value="1"/>
</dbReference>
<dbReference type="Pfam" id="PF01810">
    <property type="entry name" value="LysE"/>
    <property type="match status" value="1"/>
</dbReference>
<dbReference type="PIRSF" id="PIRSF006324">
    <property type="entry name" value="LeuE"/>
    <property type="match status" value="1"/>
</dbReference>
<protein>
    <recommendedName>
        <fullName>Uncharacterized membrane protein VC_0136</fullName>
    </recommendedName>
</protein>